<feature type="chain" id="PRO_0000341813" description="2-succinyl-5-enolpyruvyl-6-hydroxy-3-cyclohexene-1-carboxylate synthase">
    <location>
        <begin position="1"/>
        <end position="554"/>
    </location>
</feature>
<keyword id="KW-0460">Magnesium</keyword>
<keyword id="KW-0464">Manganese</keyword>
<keyword id="KW-0474">Menaquinone biosynthesis</keyword>
<keyword id="KW-0479">Metal-binding</keyword>
<keyword id="KW-1185">Reference proteome</keyword>
<keyword id="KW-0786">Thiamine pyrophosphate</keyword>
<keyword id="KW-0808">Transferase</keyword>
<protein>
    <recommendedName>
        <fullName evidence="1">2-succinyl-5-enolpyruvyl-6-hydroxy-3-cyclohexene-1-carboxylate synthase</fullName>
        <shortName evidence="1">SEPHCHC synthase</shortName>
        <ecNumber evidence="1">2.2.1.9</ecNumber>
    </recommendedName>
    <alternativeName>
        <fullName evidence="1">Menaquinone biosynthesis protein MenD</fullName>
    </alternativeName>
</protein>
<name>MEND_RENSM</name>
<gene>
    <name evidence="1" type="primary">menD</name>
    <name type="ordered locus">RSal33209_2643</name>
</gene>
<accession>A9WRT6</accession>
<evidence type="ECO:0000255" key="1">
    <source>
        <dbReference type="HAMAP-Rule" id="MF_01659"/>
    </source>
</evidence>
<organism>
    <name type="scientific">Renibacterium salmoninarum (strain ATCC 33209 / DSM 20767 / JCM 11484 / NBRC 15589 / NCIMB 2235)</name>
    <dbReference type="NCBI Taxonomy" id="288705"/>
    <lineage>
        <taxon>Bacteria</taxon>
        <taxon>Bacillati</taxon>
        <taxon>Actinomycetota</taxon>
        <taxon>Actinomycetes</taxon>
        <taxon>Micrococcales</taxon>
        <taxon>Micrococcaceae</taxon>
        <taxon>Renibacterium</taxon>
    </lineage>
</organism>
<comment type="function">
    <text evidence="1">Catalyzes the thiamine diphosphate-dependent decarboxylation of 2-oxoglutarate and the subsequent addition of the resulting succinic semialdehyde-thiamine pyrophosphate anion to isochorismate to yield 2-succinyl-5-enolpyruvyl-6-hydroxy-3-cyclohexene-1-carboxylate (SEPHCHC).</text>
</comment>
<comment type="catalytic activity">
    <reaction evidence="1">
        <text>isochorismate + 2-oxoglutarate + H(+) = 5-enolpyruvoyl-6-hydroxy-2-succinyl-cyclohex-3-ene-1-carboxylate + CO2</text>
        <dbReference type="Rhea" id="RHEA:25593"/>
        <dbReference type="ChEBI" id="CHEBI:15378"/>
        <dbReference type="ChEBI" id="CHEBI:16526"/>
        <dbReference type="ChEBI" id="CHEBI:16810"/>
        <dbReference type="ChEBI" id="CHEBI:29780"/>
        <dbReference type="ChEBI" id="CHEBI:58818"/>
        <dbReference type="EC" id="2.2.1.9"/>
    </reaction>
</comment>
<comment type="cofactor">
    <cofactor evidence="1">
        <name>Mg(2+)</name>
        <dbReference type="ChEBI" id="CHEBI:18420"/>
    </cofactor>
    <cofactor evidence="1">
        <name>Mn(2+)</name>
        <dbReference type="ChEBI" id="CHEBI:29035"/>
    </cofactor>
</comment>
<comment type="cofactor">
    <cofactor evidence="1">
        <name>thiamine diphosphate</name>
        <dbReference type="ChEBI" id="CHEBI:58937"/>
    </cofactor>
    <text evidence="1">Binds 1 thiamine pyrophosphate per subunit.</text>
</comment>
<comment type="pathway">
    <text evidence="1">Quinol/quinone metabolism; 1,4-dihydroxy-2-naphthoate biosynthesis; 1,4-dihydroxy-2-naphthoate from chorismate: step 2/7.</text>
</comment>
<comment type="pathway">
    <text evidence="1">Quinol/quinone metabolism; menaquinone biosynthesis.</text>
</comment>
<comment type="subunit">
    <text evidence="1">Homodimer.</text>
</comment>
<comment type="similarity">
    <text evidence="1">Belongs to the TPP enzyme family. MenD subfamily.</text>
</comment>
<dbReference type="EC" id="2.2.1.9" evidence="1"/>
<dbReference type="EMBL" id="CP000910">
    <property type="protein sequence ID" value="ABY24368.1"/>
    <property type="molecule type" value="Genomic_DNA"/>
</dbReference>
<dbReference type="SMR" id="A9WRT6"/>
<dbReference type="STRING" id="288705.RSal33209_2643"/>
<dbReference type="KEGG" id="rsa:RSal33209_2643"/>
<dbReference type="eggNOG" id="COG1165">
    <property type="taxonomic scope" value="Bacteria"/>
</dbReference>
<dbReference type="HOGENOM" id="CLU_006051_4_0_11"/>
<dbReference type="UniPathway" id="UPA00079"/>
<dbReference type="UniPathway" id="UPA01057">
    <property type="reaction ID" value="UER00164"/>
</dbReference>
<dbReference type="Proteomes" id="UP000002007">
    <property type="component" value="Chromosome"/>
</dbReference>
<dbReference type="GO" id="GO:0070204">
    <property type="term" value="F:2-succinyl-5-enolpyruvyl-6-hydroxy-3-cyclohexene-1-carboxylic-acid synthase activity"/>
    <property type="evidence" value="ECO:0007669"/>
    <property type="project" value="UniProtKB-UniRule"/>
</dbReference>
<dbReference type="GO" id="GO:0000287">
    <property type="term" value="F:magnesium ion binding"/>
    <property type="evidence" value="ECO:0007669"/>
    <property type="project" value="UniProtKB-UniRule"/>
</dbReference>
<dbReference type="GO" id="GO:0030145">
    <property type="term" value="F:manganese ion binding"/>
    <property type="evidence" value="ECO:0007669"/>
    <property type="project" value="UniProtKB-UniRule"/>
</dbReference>
<dbReference type="GO" id="GO:0030976">
    <property type="term" value="F:thiamine pyrophosphate binding"/>
    <property type="evidence" value="ECO:0007669"/>
    <property type="project" value="UniProtKB-UniRule"/>
</dbReference>
<dbReference type="GO" id="GO:0009234">
    <property type="term" value="P:menaquinone biosynthetic process"/>
    <property type="evidence" value="ECO:0007669"/>
    <property type="project" value="UniProtKB-UniRule"/>
</dbReference>
<dbReference type="CDD" id="cd07037">
    <property type="entry name" value="TPP_PYR_MenD"/>
    <property type="match status" value="1"/>
</dbReference>
<dbReference type="CDD" id="cd02009">
    <property type="entry name" value="TPP_SHCHC_synthase"/>
    <property type="match status" value="1"/>
</dbReference>
<dbReference type="Gene3D" id="3.40.50.970">
    <property type="match status" value="2"/>
</dbReference>
<dbReference type="Gene3D" id="3.40.50.1220">
    <property type="entry name" value="TPP-binding domain"/>
    <property type="match status" value="1"/>
</dbReference>
<dbReference type="HAMAP" id="MF_01659">
    <property type="entry name" value="MenD"/>
    <property type="match status" value="1"/>
</dbReference>
<dbReference type="InterPro" id="IPR004433">
    <property type="entry name" value="MenaQ_synth_MenD"/>
</dbReference>
<dbReference type="InterPro" id="IPR029061">
    <property type="entry name" value="THDP-binding"/>
</dbReference>
<dbReference type="InterPro" id="IPR012001">
    <property type="entry name" value="Thiamin_PyroP_enz_TPP-bd_dom"/>
</dbReference>
<dbReference type="InterPro" id="IPR011766">
    <property type="entry name" value="TPP_enzyme_TPP-bd"/>
</dbReference>
<dbReference type="NCBIfam" id="TIGR00173">
    <property type="entry name" value="menD"/>
    <property type="match status" value="1"/>
</dbReference>
<dbReference type="PANTHER" id="PTHR42916">
    <property type="entry name" value="2-SUCCINYL-5-ENOLPYRUVYL-6-HYDROXY-3-CYCLOHEXENE-1-CARBOXYLATE SYNTHASE"/>
    <property type="match status" value="1"/>
</dbReference>
<dbReference type="PANTHER" id="PTHR42916:SF1">
    <property type="entry name" value="PROTEIN PHYLLO, CHLOROPLASTIC"/>
    <property type="match status" value="1"/>
</dbReference>
<dbReference type="Pfam" id="PF02775">
    <property type="entry name" value="TPP_enzyme_C"/>
    <property type="match status" value="1"/>
</dbReference>
<dbReference type="Pfam" id="PF02776">
    <property type="entry name" value="TPP_enzyme_N"/>
    <property type="match status" value="1"/>
</dbReference>
<dbReference type="PIRSF" id="PIRSF004983">
    <property type="entry name" value="MenD"/>
    <property type="match status" value="1"/>
</dbReference>
<dbReference type="SUPFAM" id="SSF52518">
    <property type="entry name" value="Thiamin diphosphate-binding fold (THDP-binding)"/>
    <property type="match status" value="2"/>
</dbReference>
<reference key="1">
    <citation type="journal article" date="2008" name="J. Bacteriol.">
        <title>Genome sequence of the fish pathogen Renibacterium salmoninarum suggests reductive evolution away from an environmental Arthrobacter ancestor.</title>
        <authorList>
            <person name="Wiens G.D."/>
            <person name="Rockey D.D."/>
            <person name="Wu Z."/>
            <person name="Chang J."/>
            <person name="Levy R."/>
            <person name="Crane S."/>
            <person name="Chen D.S."/>
            <person name="Capri G.R."/>
            <person name="Burnett J.R."/>
            <person name="Sudheesh P.S."/>
            <person name="Schipma M.J."/>
            <person name="Burd H."/>
            <person name="Bhattacharyya A."/>
            <person name="Rhodes L.D."/>
            <person name="Kaul R."/>
            <person name="Strom M.S."/>
        </authorList>
    </citation>
    <scope>NUCLEOTIDE SEQUENCE [LARGE SCALE GENOMIC DNA]</scope>
    <source>
        <strain>ATCC 33209 / DSM 20767 / JCM 11484 / NBRC 15589 / NCIMB 2235</strain>
    </source>
</reference>
<sequence>MVNASVTGIGSMESARRVVEALIRGGVQHVVVSPGSRNAPLVYALAEAQQAIHVVVRIDERSAGFTALGLAIGSSSPVAVLTTSGTAVGNLLPAVMEADHAGVPLLVLSADRPEELRGTGANQTTDQIDLFGSHVRFAADVAAGDLPEPAVRTGLDAALGRLDGVATGPVQLNFAFRDPLTPALDGSDFRPLKSSQPVDAAIETIIPQHQESEHRYQTVVLAGHGAGPQAELFARRHGLPLLAEPSSNARFGPNAVGPYRLLLEHFEALIERVVIFGRPTLSRPVAALMNRADLPRALYLPRPATWFEEGKRSEQIISDWAALSEFTGSGSASWLEIWLAAQIQAEAALDDALGEELSGLRLARELWGSSENLVIGSSNPIRDADLAGRPRSESPRVHANRGLAGIDGTISTATGIALATARPTRLLVGDLTFLHDVGGLLLPRGEQVPDLQIVVLNDSGGGIFTLLEHGTLGDEPAYQAAVERYFGTAHDAELASLAAAYGLEYQLVSSTEQLVEMLQAPVSGRSVLEIRTERTALRGLHDRVRAAISAALTI</sequence>
<proteinExistence type="inferred from homology"/>